<organism>
    <name type="scientific">Homo sapiens</name>
    <name type="common">Human</name>
    <dbReference type="NCBI Taxonomy" id="9606"/>
    <lineage>
        <taxon>Eukaryota</taxon>
        <taxon>Metazoa</taxon>
        <taxon>Chordata</taxon>
        <taxon>Craniata</taxon>
        <taxon>Vertebrata</taxon>
        <taxon>Euteleostomi</taxon>
        <taxon>Mammalia</taxon>
        <taxon>Eutheria</taxon>
        <taxon>Euarchontoglires</taxon>
        <taxon>Primates</taxon>
        <taxon>Haplorrhini</taxon>
        <taxon>Catarrhini</taxon>
        <taxon>Hominidae</taxon>
        <taxon>Homo</taxon>
    </lineage>
</organism>
<name>ATD3A_HUMAN</name>
<accession>Q9NVI7</accession>
<accession>B3KPB3</accession>
<accession>D2K8Q1</accession>
<accession>G3V1I6</accession>
<accession>Q5SV23</accession>
<accession>Q8N275</accession>
<accession>Q96A50</accession>
<keyword id="KW-0007">Acetylation</keyword>
<keyword id="KW-0025">Alternative splicing</keyword>
<keyword id="KW-0067">ATP-binding</keyword>
<keyword id="KW-0175">Coiled coil</keyword>
<keyword id="KW-0903">Direct protein sequencing</keyword>
<keyword id="KW-0225">Disease variant</keyword>
<keyword id="KW-0378">Hydrolase</keyword>
<keyword id="KW-0472">Membrane</keyword>
<keyword id="KW-0496">Mitochondrion</keyword>
<keyword id="KW-0999">Mitochondrion inner membrane</keyword>
<keyword id="KW-1135">Mitochondrion nucleoid</keyword>
<keyword id="KW-0547">Nucleotide-binding</keyword>
<keyword id="KW-0597">Phosphoprotein</keyword>
<keyword id="KW-1267">Proteomics identification</keyword>
<keyword id="KW-1185">Reference proteome</keyword>
<keyword id="KW-0812">Transmembrane</keyword>
<keyword id="KW-1133">Transmembrane helix</keyword>
<evidence type="ECO:0000255" key="1"/>
<evidence type="ECO:0000256" key="2">
    <source>
        <dbReference type="SAM" id="MobiDB-lite"/>
    </source>
</evidence>
<evidence type="ECO:0000269" key="3">
    <source>
    </source>
</evidence>
<evidence type="ECO:0000269" key="4">
    <source>
    </source>
</evidence>
<evidence type="ECO:0000269" key="5">
    <source>
    </source>
</evidence>
<evidence type="ECO:0000269" key="6">
    <source>
    </source>
</evidence>
<evidence type="ECO:0000269" key="7">
    <source>
    </source>
</evidence>
<evidence type="ECO:0000269" key="8">
    <source>
    </source>
</evidence>
<evidence type="ECO:0000269" key="9">
    <source>
    </source>
</evidence>
<evidence type="ECO:0000269" key="10">
    <source>
    </source>
</evidence>
<evidence type="ECO:0000269" key="11">
    <source>
    </source>
</evidence>
<evidence type="ECO:0000269" key="12">
    <source>
    </source>
</evidence>
<evidence type="ECO:0000269" key="13">
    <source>
    </source>
</evidence>
<evidence type="ECO:0000269" key="14">
    <source>
    </source>
</evidence>
<evidence type="ECO:0000269" key="15">
    <source>
    </source>
</evidence>
<evidence type="ECO:0000269" key="16">
    <source>
    </source>
</evidence>
<evidence type="ECO:0000269" key="17">
    <source>
    </source>
</evidence>
<evidence type="ECO:0000269" key="18">
    <source ref="6"/>
</evidence>
<evidence type="ECO:0000303" key="19">
    <source>
    </source>
</evidence>
<evidence type="ECO:0000305" key="20"/>
<evidence type="ECO:0000305" key="21">
    <source>
    </source>
</evidence>
<evidence type="ECO:0000312" key="22">
    <source>
        <dbReference type="HGNC" id="HGNC:25567"/>
    </source>
</evidence>
<evidence type="ECO:0007744" key="23">
    <source>
    </source>
</evidence>
<evidence type="ECO:0007744" key="24">
    <source>
    </source>
</evidence>
<protein>
    <recommendedName>
        <fullName evidence="20">ATPase family AAA domain-containing protein 3A</fullName>
        <ecNumber evidence="6 21">3.6.1.-</ecNumber>
    </recommendedName>
</protein>
<reference key="1">
    <citation type="journal article" date="2010" name="J. Cell Sci.">
        <title>ATPase family AAA domain-containing 3A is a novel anti-apoptotic factor in lung adenocarcinoma cells.</title>
        <authorList>
            <person name="Fang H.Y."/>
            <person name="Chang C.L."/>
            <person name="Hsu S.H."/>
            <person name="Huang C.Y."/>
            <person name="Chiang S.F."/>
            <person name="Chiou S.H."/>
            <person name="Huang C.H."/>
            <person name="Hsiao Y.T."/>
            <person name="Lin T.Y."/>
            <person name="Chiang I.P."/>
            <person name="Hsu W.H."/>
            <person name="Sugano S."/>
            <person name="Chen C.Y."/>
            <person name="Lin C.Y."/>
            <person name="Ko W.J."/>
            <person name="Chow K.C."/>
        </authorList>
    </citation>
    <scope>NUCLEOTIDE SEQUENCE [MRNA] (ISOFORM 2)</scope>
    <scope>SUBCELLULAR LOCATION</scope>
    <scope>TISSUE SPECIFICITY</scope>
    <source>
        <tissue>Lung adenocarcinoma</tissue>
    </source>
</reference>
<reference key="2">
    <citation type="journal article" date="2004" name="Nat. Genet.">
        <title>Complete sequencing and characterization of 21,243 full-length human cDNAs.</title>
        <authorList>
            <person name="Ota T."/>
            <person name="Suzuki Y."/>
            <person name="Nishikawa T."/>
            <person name="Otsuki T."/>
            <person name="Sugiyama T."/>
            <person name="Irie R."/>
            <person name="Wakamatsu A."/>
            <person name="Hayashi K."/>
            <person name="Sato H."/>
            <person name="Nagai K."/>
            <person name="Kimura K."/>
            <person name="Makita H."/>
            <person name="Sekine M."/>
            <person name="Obayashi M."/>
            <person name="Nishi T."/>
            <person name="Shibahara T."/>
            <person name="Tanaka T."/>
            <person name="Ishii S."/>
            <person name="Yamamoto J."/>
            <person name="Saito K."/>
            <person name="Kawai Y."/>
            <person name="Isono Y."/>
            <person name="Nakamura Y."/>
            <person name="Nagahari K."/>
            <person name="Murakami K."/>
            <person name="Yasuda T."/>
            <person name="Iwayanagi T."/>
            <person name="Wagatsuma M."/>
            <person name="Shiratori A."/>
            <person name="Sudo H."/>
            <person name="Hosoiri T."/>
            <person name="Kaku Y."/>
            <person name="Kodaira H."/>
            <person name="Kondo H."/>
            <person name="Sugawara M."/>
            <person name="Takahashi M."/>
            <person name="Kanda K."/>
            <person name="Yokoi T."/>
            <person name="Furuya T."/>
            <person name="Kikkawa E."/>
            <person name="Omura Y."/>
            <person name="Abe K."/>
            <person name="Kamihara K."/>
            <person name="Katsuta N."/>
            <person name="Sato K."/>
            <person name="Tanikawa M."/>
            <person name="Yamazaki M."/>
            <person name="Ninomiya K."/>
            <person name="Ishibashi T."/>
            <person name="Yamashita H."/>
            <person name="Murakawa K."/>
            <person name="Fujimori K."/>
            <person name="Tanai H."/>
            <person name="Kimata M."/>
            <person name="Watanabe M."/>
            <person name="Hiraoka S."/>
            <person name="Chiba Y."/>
            <person name="Ishida S."/>
            <person name="Ono Y."/>
            <person name="Takiguchi S."/>
            <person name="Watanabe S."/>
            <person name="Yosida M."/>
            <person name="Hotuta T."/>
            <person name="Kusano J."/>
            <person name="Kanehori K."/>
            <person name="Takahashi-Fujii A."/>
            <person name="Hara H."/>
            <person name="Tanase T.-O."/>
            <person name="Nomura Y."/>
            <person name="Togiya S."/>
            <person name="Komai F."/>
            <person name="Hara R."/>
            <person name="Takeuchi K."/>
            <person name="Arita M."/>
            <person name="Imose N."/>
            <person name="Musashino K."/>
            <person name="Yuuki H."/>
            <person name="Oshima A."/>
            <person name="Sasaki N."/>
            <person name="Aotsuka S."/>
            <person name="Yoshikawa Y."/>
            <person name="Matsunawa H."/>
            <person name="Ichihara T."/>
            <person name="Shiohata N."/>
            <person name="Sano S."/>
            <person name="Moriya S."/>
            <person name="Momiyama H."/>
            <person name="Satoh N."/>
            <person name="Takami S."/>
            <person name="Terashima Y."/>
            <person name="Suzuki O."/>
            <person name="Nakagawa S."/>
            <person name="Senoh A."/>
            <person name="Mizoguchi H."/>
            <person name="Goto Y."/>
            <person name="Shimizu F."/>
            <person name="Wakebe H."/>
            <person name="Hishigaki H."/>
            <person name="Watanabe T."/>
            <person name="Sugiyama A."/>
            <person name="Takemoto M."/>
            <person name="Kawakami B."/>
            <person name="Yamazaki M."/>
            <person name="Watanabe K."/>
            <person name="Kumagai A."/>
            <person name="Itakura S."/>
            <person name="Fukuzumi Y."/>
            <person name="Fujimori Y."/>
            <person name="Komiyama M."/>
            <person name="Tashiro H."/>
            <person name="Tanigami A."/>
            <person name="Fujiwara T."/>
            <person name="Ono T."/>
            <person name="Yamada K."/>
            <person name="Fujii Y."/>
            <person name="Ozaki K."/>
            <person name="Hirao M."/>
            <person name="Ohmori Y."/>
            <person name="Kawabata A."/>
            <person name="Hikiji T."/>
            <person name="Kobatake N."/>
            <person name="Inagaki H."/>
            <person name="Ikema Y."/>
            <person name="Okamoto S."/>
            <person name="Okitani R."/>
            <person name="Kawakami T."/>
            <person name="Noguchi S."/>
            <person name="Itoh T."/>
            <person name="Shigeta K."/>
            <person name="Senba T."/>
            <person name="Matsumura K."/>
            <person name="Nakajima Y."/>
            <person name="Mizuno T."/>
            <person name="Morinaga M."/>
            <person name="Sasaki M."/>
            <person name="Togashi T."/>
            <person name="Oyama M."/>
            <person name="Hata H."/>
            <person name="Watanabe M."/>
            <person name="Komatsu T."/>
            <person name="Mizushima-Sugano J."/>
            <person name="Satoh T."/>
            <person name="Shirai Y."/>
            <person name="Takahashi Y."/>
            <person name="Nakagawa K."/>
            <person name="Okumura K."/>
            <person name="Nagase T."/>
            <person name="Nomura N."/>
            <person name="Kikuchi H."/>
            <person name="Masuho Y."/>
            <person name="Yamashita R."/>
            <person name="Nakai K."/>
            <person name="Yada T."/>
            <person name="Nakamura Y."/>
            <person name="Ohara O."/>
            <person name="Isogai T."/>
            <person name="Sugano S."/>
        </authorList>
    </citation>
    <scope>NUCLEOTIDE SEQUENCE [LARGE SCALE MRNA] (ISOFORMS 1; 2 AND 3)</scope>
    <source>
        <tissue>Teratocarcinoma</tissue>
        <tissue>Tongue</tissue>
    </source>
</reference>
<reference key="3">
    <citation type="journal article" date="2006" name="Nature">
        <title>The DNA sequence and biological annotation of human chromosome 1.</title>
        <authorList>
            <person name="Gregory S.G."/>
            <person name="Barlow K.F."/>
            <person name="McLay K.E."/>
            <person name="Kaul R."/>
            <person name="Swarbreck D."/>
            <person name="Dunham A."/>
            <person name="Scott C.E."/>
            <person name="Howe K.L."/>
            <person name="Woodfine K."/>
            <person name="Spencer C.C.A."/>
            <person name="Jones M.C."/>
            <person name="Gillson C."/>
            <person name="Searle S."/>
            <person name="Zhou Y."/>
            <person name="Kokocinski F."/>
            <person name="McDonald L."/>
            <person name="Evans R."/>
            <person name="Phillips K."/>
            <person name="Atkinson A."/>
            <person name="Cooper R."/>
            <person name="Jones C."/>
            <person name="Hall R.E."/>
            <person name="Andrews T.D."/>
            <person name="Lloyd C."/>
            <person name="Ainscough R."/>
            <person name="Almeida J.P."/>
            <person name="Ambrose K.D."/>
            <person name="Anderson F."/>
            <person name="Andrew R.W."/>
            <person name="Ashwell R.I.S."/>
            <person name="Aubin K."/>
            <person name="Babbage A.K."/>
            <person name="Bagguley C.L."/>
            <person name="Bailey J."/>
            <person name="Beasley H."/>
            <person name="Bethel G."/>
            <person name="Bird C.P."/>
            <person name="Bray-Allen S."/>
            <person name="Brown J.Y."/>
            <person name="Brown A.J."/>
            <person name="Buckley D."/>
            <person name="Burton J."/>
            <person name="Bye J."/>
            <person name="Carder C."/>
            <person name="Chapman J.C."/>
            <person name="Clark S.Y."/>
            <person name="Clarke G."/>
            <person name="Clee C."/>
            <person name="Cobley V."/>
            <person name="Collier R.E."/>
            <person name="Corby N."/>
            <person name="Coville G.J."/>
            <person name="Davies J."/>
            <person name="Deadman R."/>
            <person name="Dunn M."/>
            <person name="Earthrowl M."/>
            <person name="Ellington A.G."/>
            <person name="Errington H."/>
            <person name="Frankish A."/>
            <person name="Frankland J."/>
            <person name="French L."/>
            <person name="Garner P."/>
            <person name="Garnett J."/>
            <person name="Gay L."/>
            <person name="Ghori M.R.J."/>
            <person name="Gibson R."/>
            <person name="Gilby L.M."/>
            <person name="Gillett W."/>
            <person name="Glithero R.J."/>
            <person name="Grafham D.V."/>
            <person name="Griffiths C."/>
            <person name="Griffiths-Jones S."/>
            <person name="Grocock R."/>
            <person name="Hammond S."/>
            <person name="Harrison E.S.I."/>
            <person name="Hart E."/>
            <person name="Haugen E."/>
            <person name="Heath P.D."/>
            <person name="Holmes S."/>
            <person name="Holt K."/>
            <person name="Howden P.J."/>
            <person name="Hunt A.R."/>
            <person name="Hunt S.E."/>
            <person name="Hunter G."/>
            <person name="Isherwood J."/>
            <person name="James R."/>
            <person name="Johnson C."/>
            <person name="Johnson D."/>
            <person name="Joy A."/>
            <person name="Kay M."/>
            <person name="Kershaw J.K."/>
            <person name="Kibukawa M."/>
            <person name="Kimberley A.M."/>
            <person name="King A."/>
            <person name="Knights A.J."/>
            <person name="Lad H."/>
            <person name="Laird G."/>
            <person name="Lawlor S."/>
            <person name="Leongamornlert D.A."/>
            <person name="Lloyd D.M."/>
            <person name="Loveland J."/>
            <person name="Lovell J."/>
            <person name="Lush M.J."/>
            <person name="Lyne R."/>
            <person name="Martin S."/>
            <person name="Mashreghi-Mohammadi M."/>
            <person name="Matthews L."/>
            <person name="Matthews N.S.W."/>
            <person name="McLaren S."/>
            <person name="Milne S."/>
            <person name="Mistry S."/>
            <person name="Moore M.J.F."/>
            <person name="Nickerson T."/>
            <person name="O'Dell C.N."/>
            <person name="Oliver K."/>
            <person name="Palmeiri A."/>
            <person name="Palmer S.A."/>
            <person name="Parker A."/>
            <person name="Patel D."/>
            <person name="Pearce A.V."/>
            <person name="Peck A.I."/>
            <person name="Pelan S."/>
            <person name="Phelps K."/>
            <person name="Phillimore B.J."/>
            <person name="Plumb R."/>
            <person name="Rajan J."/>
            <person name="Raymond C."/>
            <person name="Rouse G."/>
            <person name="Saenphimmachak C."/>
            <person name="Sehra H.K."/>
            <person name="Sheridan E."/>
            <person name="Shownkeen R."/>
            <person name="Sims S."/>
            <person name="Skuce C.D."/>
            <person name="Smith M."/>
            <person name="Steward C."/>
            <person name="Subramanian S."/>
            <person name="Sycamore N."/>
            <person name="Tracey A."/>
            <person name="Tromans A."/>
            <person name="Van Helmond Z."/>
            <person name="Wall M."/>
            <person name="Wallis J.M."/>
            <person name="White S."/>
            <person name="Whitehead S.L."/>
            <person name="Wilkinson J.E."/>
            <person name="Willey D.L."/>
            <person name="Williams H."/>
            <person name="Wilming L."/>
            <person name="Wray P.W."/>
            <person name="Wu Z."/>
            <person name="Coulson A."/>
            <person name="Vaudin M."/>
            <person name="Sulston J.E."/>
            <person name="Durbin R.M."/>
            <person name="Hubbard T."/>
            <person name="Wooster R."/>
            <person name="Dunham I."/>
            <person name="Carter N.P."/>
            <person name="McVean G."/>
            <person name="Ross M.T."/>
            <person name="Harrow J."/>
            <person name="Olson M.V."/>
            <person name="Beck S."/>
            <person name="Rogers J."/>
            <person name="Bentley D.R."/>
        </authorList>
    </citation>
    <scope>NUCLEOTIDE SEQUENCE [LARGE SCALE GENOMIC DNA]</scope>
</reference>
<reference key="4">
    <citation type="submission" date="2005-07" db="EMBL/GenBank/DDBJ databases">
        <authorList>
            <person name="Mural R.J."/>
            <person name="Istrail S."/>
            <person name="Sutton G.G."/>
            <person name="Florea L."/>
            <person name="Halpern A.L."/>
            <person name="Mobarry C.M."/>
            <person name="Lippert R."/>
            <person name="Walenz B."/>
            <person name="Shatkay H."/>
            <person name="Dew I."/>
            <person name="Miller J.R."/>
            <person name="Flanigan M.J."/>
            <person name="Edwards N.J."/>
            <person name="Bolanos R."/>
            <person name="Fasulo D."/>
            <person name="Halldorsson B.V."/>
            <person name="Hannenhalli S."/>
            <person name="Turner R."/>
            <person name="Yooseph S."/>
            <person name="Lu F."/>
            <person name="Nusskern D.R."/>
            <person name="Shue B.C."/>
            <person name="Zheng X.H."/>
            <person name="Zhong F."/>
            <person name="Delcher A.L."/>
            <person name="Huson D.H."/>
            <person name="Kravitz S.A."/>
            <person name="Mouchard L."/>
            <person name="Reinert K."/>
            <person name="Remington K.A."/>
            <person name="Clark A.G."/>
            <person name="Waterman M.S."/>
            <person name="Eichler E.E."/>
            <person name="Adams M.D."/>
            <person name="Hunkapiller M.W."/>
            <person name="Myers E.W."/>
            <person name="Venter J.C."/>
        </authorList>
    </citation>
    <scope>NUCLEOTIDE SEQUENCE [LARGE SCALE GENOMIC DNA]</scope>
</reference>
<reference key="5">
    <citation type="journal article" date="2004" name="Genome Res.">
        <title>The status, quality, and expansion of the NIH full-length cDNA project: the Mammalian Gene Collection (MGC).</title>
        <authorList>
            <consortium name="The MGC Project Team"/>
        </authorList>
    </citation>
    <scope>NUCLEOTIDE SEQUENCE [LARGE SCALE MRNA] (ISOFORM 2)</scope>
    <scope>VARIANT ASP-15</scope>
    <source>
        <tissue>Brain</tissue>
        <tissue>Skin</tissue>
    </source>
</reference>
<reference key="6">
    <citation type="submission" date="2007-07" db="UniProtKB">
        <authorList>
            <person name="Bienvenut W.V."/>
            <person name="Heiserich L."/>
            <person name="Boulahbel H."/>
            <person name="Gottlieb E."/>
        </authorList>
    </citation>
    <scope>PROTEIN SEQUENCE OF 2-9; 202-208; 228-238; 291-298; 395-403; 431-439 AND 558-568 (ISOFORMS 1/2)</scope>
    <scope>PROTEIN SEQUENCE OF 93-104 (ISOFORM 2)</scope>
    <scope>CLEAVAGE OF INITIATOR METHIONINE</scope>
    <scope>ACETYLATION AT SER-2</scope>
    <scope>IDENTIFICATION BY MASS SPECTROMETRY</scope>
    <source>
        <tissue>Colon carcinoma</tissue>
    </source>
</reference>
<reference key="7">
    <citation type="journal article" date="2007" name="J. Cell Biol.">
        <title>The AAA+ protein ATAD3 has displacement loop binding properties and is involved in mitochondrial nucleoid organization.</title>
        <authorList>
            <person name="He J."/>
            <person name="Mao C.C."/>
            <person name="Reyes A."/>
            <person name="Sembongi H."/>
            <person name="Di Re M."/>
            <person name="Granycome C."/>
            <person name="Clippingdale A.B."/>
            <person name="Fearnley I.M."/>
            <person name="Harbour M."/>
            <person name="Robinson A.J."/>
            <person name="Reichelt S."/>
            <person name="Spelbrink J.N."/>
            <person name="Walker J.E."/>
            <person name="Holt I.J."/>
        </authorList>
    </citation>
    <scope>FUNCTION</scope>
    <scope>SUBCELLULAR LOCATION</scope>
    <scope>ASSOCIATION WITH NUCLEOIDS</scope>
</reference>
<reference key="8">
    <citation type="journal article" date="2008" name="J. Biol. Chem.">
        <title>The layered structure of human mitochondrial DNA nucleoids.</title>
        <authorList>
            <person name="Bogenhagen D.F."/>
            <person name="Rousseau D."/>
            <person name="Burke S."/>
        </authorList>
    </citation>
    <scope>SUBCELLULAR LOCATION</scope>
    <scope>TOPOLOGY</scope>
    <scope>ASSOCIATION WITH NUCLEOIDS</scope>
</reference>
<reference key="9">
    <citation type="journal article" date="2008" name="Mol. Cell">
        <title>Kinase-selective enrichment enables quantitative phosphoproteomics of the kinome across the cell cycle.</title>
        <authorList>
            <person name="Daub H."/>
            <person name="Olsen J.V."/>
            <person name="Bairlein M."/>
            <person name="Gnad F."/>
            <person name="Oppermann F.S."/>
            <person name="Korner R."/>
            <person name="Greff Z."/>
            <person name="Keri G."/>
            <person name="Stemmann O."/>
            <person name="Mann M."/>
        </authorList>
    </citation>
    <scope>IDENTIFICATION BY MASS SPECTROMETRY [LARGE SCALE ANALYSIS]</scope>
    <source>
        <tissue>Cervix carcinoma</tissue>
    </source>
</reference>
<reference key="10">
    <citation type="journal article" date="2009" name="Science">
        <title>Lysine acetylation targets protein complexes and co-regulates major cellular functions.</title>
        <authorList>
            <person name="Choudhary C."/>
            <person name="Kumar C."/>
            <person name="Gnad F."/>
            <person name="Nielsen M.L."/>
            <person name="Rehman M."/>
            <person name="Walther T.C."/>
            <person name="Olsen J.V."/>
            <person name="Mann M."/>
        </authorList>
    </citation>
    <scope>ACETYLATION [LARGE SCALE ANALYSIS] AT LYS-491</scope>
    <scope>IDENTIFICATION BY MASS SPECTROMETRY [LARGE SCALE ANALYSIS]</scope>
</reference>
<reference key="11">
    <citation type="journal article" date="2010" name="J. Bioenerg. Biomembr.">
        <title>Topological analysis of ATAD3A insertion in purified human mitochondria.</title>
        <authorList>
            <person name="Hubstenberger A."/>
            <person name="Merle N."/>
            <person name="Charton R."/>
            <person name="Brandolin G."/>
            <person name="Rousseau D."/>
        </authorList>
    </citation>
    <scope>SUBCELLULAR LOCATION</scope>
    <scope>TOPOLOGY</scope>
</reference>
<reference key="12">
    <citation type="journal article" date="2010" name="Mol. Cell. Biol.">
        <title>The AAA+ ATPase ATAD3A controls mitochondrial dynamics at the interface of the inner and outer membranes.</title>
        <authorList>
            <person name="Gilquin B."/>
            <person name="Taillebourg E."/>
            <person name="Cherradi N."/>
            <person name="Hubstenberger A."/>
            <person name="Gay O."/>
            <person name="Merle N."/>
            <person name="Assard N."/>
            <person name="Fauvarque M.O."/>
            <person name="Tomohiro S."/>
            <person name="Kuge O."/>
            <person name="Baudier J."/>
        </authorList>
    </citation>
    <scope>FUNCTION</scope>
    <scope>CATALYTIC ACTIVITY</scope>
    <scope>HOMOOLIGOMERIZATION</scope>
    <scope>INDUCTION</scope>
    <scope>SUBCELLULAR LOCATION</scope>
    <scope>TOPOLOGY</scope>
    <scope>MUTAGENESIS OF LYS-358 AND ASP-411</scope>
</reference>
<reference key="13">
    <citation type="journal article" date="2010" name="Mol. Cell. Biol.">
        <title>The calcium-dependent interaction between S100B and the mitochondrial AAA ATPase ATAD3A and the role of this complex in the cytoplasmic processing of ATAD3A.</title>
        <authorList>
            <person name="Gilquin B."/>
            <person name="Cannon B.R."/>
            <person name="Hubstenberger A."/>
            <person name="Moulouel B."/>
            <person name="Falk E."/>
            <person name="Merle N."/>
            <person name="Assard N."/>
            <person name="Kieffer S."/>
            <person name="Rousseau D."/>
            <person name="Wilder P.T."/>
            <person name="Weber D.J."/>
            <person name="Baudier J."/>
        </authorList>
    </citation>
    <scope>INTERACTION WITH S100B</scope>
    <scope>MUTAGENESIS OF VAL-293; LEU-297 AND 301-ILE-GLN-302</scope>
</reference>
<reference key="14">
    <citation type="journal article" date="2011" name="BMC Syst. Biol.">
        <title>Initial characterization of the human central proteome.</title>
        <authorList>
            <person name="Burkard T.R."/>
            <person name="Planyavsky M."/>
            <person name="Kaupe I."/>
            <person name="Breitwieser F.P."/>
            <person name="Buerckstuemmer T."/>
            <person name="Bennett K.L."/>
            <person name="Superti-Furga G."/>
            <person name="Colinge J."/>
        </authorList>
    </citation>
    <scope>IDENTIFICATION BY MASS SPECTROMETRY [LARGE SCALE ANALYSIS]</scope>
</reference>
<reference key="15">
    <citation type="journal article" date="2012" name="Mitochondrion">
        <title>ATAD3B is a human embryonic stem cell specific mitochondrial protein, re-expressed in cancer cells, that functions as dominant negative for the ubiquitous ATAD3A.</title>
        <authorList>
            <person name="Merle N."/>
            <person name="Feraud O."/>
            <person name="Gilquin B."/>
            <person name="Hubstenberger A."/>
            <person name="Kieffer-Jacquinot S."/>
            <person name="Assard N."/>
            <person name="Bennaceur-Griscelli A."/>
            <person name="Honnorat J."/>
            <person name="Baudier J."/>
        </authorList>
    </citation>
    <scope>INTERACTION WITH ATAD3B AND HSPD1</scope>
</reference>
<reference key="16">
    <citation type="journal article" date="2012" name="Nucleic Acids Res.">
        <title>Mitochondrial nucleoid interacting proteins support mitochondrial protein synthesis.</title>
        <authorList>
            <person name="He J."/>
            <person name="Cooper H.M."/>
            <person name="Reyes A."/>
            <person name="Di Re M."/>
            <person name="Sembongi H."/>
            <person name="Litwin T.R."/>
            <person name="Gao J."/>
            <person name="Neuman K.C."/>
            <person name="Fearnley I.M."/>
            <person name="Spinazzola A."/>
            <person name="Walker J.E."/>
            <person name="Holt I.J."/>
        </authorList>
    </citation>
    <scope>FUNCTION</scope>
    <scope>INTERACTION WITH PROTEINS INVOLVED IN MITOCHONDRIAL TRANSLATION; RNA METABOLISM; LIPID METABOLISM; GADD45GIP1 AND FAM210A</scope>
    <scope>INDUCTION</scope>
</reference>
<reference key="17">
    <citation type="journal article" date="2013" name="J. Proteome Res.">
        <title>Toward a comprehensive characterization of a human cancer cell phosphoproteome.</title>
        <authorList>
            <person name="Zhou H."/>
            <person name="Di Palma S."/>
            <person name="Preisinger C."/>
            <person name="Peng M."/>
            <person name="Polat A.N."/>
            <person name="Heck A.J."/>
            <person name="Mohammed S."/>
        </authorList>
    </citation>
    <scope>PHOSPHORYLATION [LARGE SCALE ANALYSIS] AT SER-321</scope>
    <scope>IDENTIFICATION BY MASS SPECTROMETRY [LARGE SCALE ANALYSIS]</scope>
    <source>
        <tissue>Erythroleukemia</tissue>
    </source>
</reference>
<reference key="18">
    <citation type="journal article" date="2015" name="Proteomics">
        <title>N-terminome analysis of the human mitochondrial proteome.</title>
        <authorList>
            <person name="Vaca Jacome A.S."/>
            <person name="Rabilloud T."/>
            <person name="Schaeffer-Reiss C."/>
            <person name="Rompais M."/>
            <person name="Ayoub D."/>
            <person name="Lane L."/>
            <person name="Bairoch A."/>
            <person name="Van Dorsselaer A."/>
            <person name="Carapito C."/>
        </authorList>
    </citation>
    <scope>IDENTIFICATION BY MASS SPECTROMETRY [LARGE SCALE ANALYSIS]</scope>
</reference>
<reference key="19">
    <citation type="journal article" date="2019" name="IScience">
        <title>Structural Basis of Mitochondrial Scaffolds by Prohibitin Complexes: Insight into a Role of the Coiled-Coil Region.</title>
        <authorList>
            <person name="Yoshinaka T."/>
            <person name="Kosako H."/>
            <person name="Yoshizumi T."/>
            <person name="Furukawa R."/>
            <person name="Hirano Y."/>
            <person name="Kuge O."/>
            <person name="Tamada T."/>
            <person name="Koshiba T."/>
        </authorList>
    </citation>
    <scope>INTERACTION WITH CLPB</scope>
    <scope>FUNCTION</scope>
</reference>
<reference key="20">
    <citation type="journal article" date="2023" name="Mol. Cell">
        <title>Mitochondrial DNA breaks activate an integrated stress response to reestablish homeostasis.</title>
        <authorList>
            <person name="Fu Y."/>
            <person name="Sacco O."/>
            <person name="DeBitetto E."/>
            <person name="Kanshin E."/>
            <person name="Ueberheide B."/>
            <person name="Sfeir A."/>
        </authorList>
    </citation>
    <scope>FUNCTION</scope>
</reference>
<reference key="21">
    <citation type="journal article" date="2024" name="Science">
        <title>PERK-ATAD3A interaction provides a subcellular safe haven for protein synthesis during ER stress.</title>
        <authorList>
            <person name="Brar K.K."/>
            <person name="Hughes D.T."/>
            <person name="Morris J.L."/>
            <person name="Subramanian K."/>
            <person name="Krishna S."/>
            <person name="Gao F."/>
            <person name="Rieder L.S."/>
            <person name="Uhrig S."/>
            <person name="Freeman J."/>
            <person name="Smith H.L."/>
            <person name="Jukes-Jones R."/>
            <person name="Avezov E."/>
            <person name="Nunnari J."/>
            <person name="Prudent J."/>
            <person name="Butcher A.J."/>
            <person name="Mallucci G.R."/>
        </authorList>
    </citation>
    <scope>FUNCTION</scope>
    <scope>SUBCELLULAR LOCATION</scope>
    <scope>INTERACTION WITH EIF2AK3</scope>
    <scope>MUTAGENESIS OF GLU-412</scope>
</reference>
<reference key="22">
    <citation type="journal article" date="2016" name="Am. J. Hum. Genet.">
        <title>Recurrent de novo and biallelic variation of ATAD3A, encoding a mitochondrial membrane protein, Results in distinct neurological syndromes.</title>
        <authorList>
            <consortium name="Baylor-Hopkins Center for Mendelian Genomics"/>
            <consortium name="University of Washington Center for Mendelian Genomics"/>
            <person name="Harel T."/>
            <person name="Yoon W.H."/>
            <person name="Garone C."/>
            <person name="Gu S."/>
            <person name="Coban-Akdemir Z."/>
            <person name="Eldomery M.K."/>
            <person name="Posey J.E."/>
            <person name="Jhangiani S.N."/>
            <person name="Rosenfeld J.A."/>
            <person name="Cho M.T."/>
            <person name="Fox S."/>
            <person name="Withers M."/>
            <person name="Brooks S.M."/>
            <person name="Chiang T."/>
            <person name="Duraine L."/>
            <person name="Erdin S."/>
            <person name="Yuan B."/>
            <person name="Shao Y."/>
            <person name="Moussallem E."/>
            <person name="Lamperti C."/>
            <person name="Donati M.A."/>
            <person name="Smith J.D."/>
            <person name="McLaughlin H.M."/>
            <person name="Eng C.M."/>
            <person name="Walkiewicz M."/>
            <person name="Xia F."/>
            <person name="Pippucci T."/>
            <person name="Magini P."/>
            <person name="Seri M."/>
            <person name="Zeviani M."/>
            <person name="Hirano M."/>
            <person name="Hunter J.V."/>
            <person name="Srour M."/>
            <person name="Zanigni S."/>
            <person name="Lewis R.A."/>
            <person name="Muzny D.M."/>
            <person name="Lotze T.E."/>
            <person name="Boerwinkle E."/>
            <person name="Gibbs R.A."/>
            <person name="Hickey S.E."/>
            <person name="Graham B.H."/>
            <person name="Yang Y."/>
            <person name="Buhas D."/>
            <person name="Martin D.M."/>
            <person name="Potocki L."/>
            <person name="Graziano C."/>
            <person name="Bellen H.J."/>
            <person name="Lupski J.R."/>
        </authorList>
    </citation>
    <scope>VARIANTS HAYOS ILE-53 AND TRP-528</scope>
    <scope>INVOLVEMENT IN HAYOS</scope>
</reference>
<reference key="23">
    <citation type="journal article" date="2017" name="Brain">
        <title>Genotype-phenotype correlation in ATAD3A deletions: not just of scientific relevance.</title>
        <authorList>
            <person name="Peeters-Scholte C.M.P.C.D."/>
            <person name="Adama van Scheltema P.N."/>
            <person name="Klumper F.J.C.M."/>
            <person name="Everwijn S.M.P."/>
            <person name="Koopmans M."/>
            <person name="Hoffer M.J.V."/>
            <person name="Koopmann T.T."/>
            <person name="Ruivenkamp C.A.L."/>
            <person name="Steggerda S.J."/>
            <person name="van der Knaap M.S."/>
            <person name="Santen G.W.E."/>
        </authorList>
    </citation>
    <scope>VARIANTS PHRINL ARG-77 AND 164-GLN--SER-586 DEL</scope>
    <scope>INVOLVEMENT IN PHRINL</scope>
</reference>
<reference key="24">
    <citation type="journal article" date="2019" name="Mol. Genet. Metab.">
        <title>Novel ATAD3A recessive mutation associated to fatal cerebellar hypoplasia with multiorgan involvement and mitochondrial structural abnormalities.</title>
        <authorList>
            <person name="Peralta S."/>
            <person name="Gonzalez-Quintana A."/>
            <person name="Ybarra M."/>
            <person name="Delmiro A."/>
            <person name="Perez-Perez R."/>
            <person name="Docampo J."/>
            <person name="Arenas J."/>
            <person name="Blazquez A."/>
            <person name="Ugalde C."/>
            <person name="Martin M.A."/>
        </authorList>
    </citation>
    <scope>VARIANT PHRINL ARG-406</scope>
    <scope>INVOLVEMENT IN PHRINL</scope>
    <scope>CHARACTERIZATION OF VARIANT PHRINL ARG-406</scope>
</reference>
<feature type="initiator methionine" description="Removed" evidence="18">
    <location>
        <position position="1"/>
    </location>
</feature>
<feature type="chain" id="PRO_0000084799" description="ATPase family AAA domain-containing protein 3A">
    <location>
        <begin position="2"/>
        <end position="586"/>
    </location>
</feature>
<feature type="topological domain" description="Mitochondrial intermembrane" evidence="1">
    <location>
        <begin position="2"/>
        <end position="246"/>
    </location>
</feature>
<feature type="transmembrane region" description="Helical" evidence="1">
    <location>
        <begin position="247"/>
        <end position="264"/>
    </location>
</feature>
<feature type="topological domain" description="Mitochondrial matrix" evidence="1">
    <location>
        <begin position="265"/>
        <end position="586"/>
    </location>
</feature>
<feature type="region of interest" description="Disordered" evidence="2">
    <location>
        <begin position="1"/>
        <end position="55"/>
    </location>
</feature>
<feature type="region of interest" description="Required for interaction with the inner surface of the mitochondrial outer membrane" evidence="5">
    <location>
        <begin position="2"/>
        <end position="50"/>
    </location>
</feature>
<feature type="region of interest" description="Disordered" evidence="2">
    <location>
        <begin position="111"/>
        <end position="134"/>
    </location>
</feature>
<feature type="region of interest" description="S100B-binding" evidence="9">
    <location>
        <begin position="290"/>
        <end position="305"/>
    </location>
</feature>
<feature type="coiled-coil region" evidence="1">
    <location>
        <begin position="86"/>
        <end position="219"/>
    </location>
</feature>
<feature type="compositionally biased region" description="Pro residues" evidence="2">
    <location>
        <begin position="17"/>
        <end position="26"/>
    </location>
</feature>
<feature type="compositionally biased region" description="Basic and acidic residues" evidence="2">
    <location>
        <begin position="32"/>
        <end position="48"/>
    </location>
</feature>
<feature type="compositionally biased region" description="Basic and acidic residues" evidence="2">
    <location>
        <begin position="111"/>
        <end position="125"/>
    </location>
</feature>
<feature type="binding site" evidence="1">
    <location>
        <begin position="352"/>
        <end position="359"/>
    </location>
    <ligand>
        <name>ATP</name>
        <dbReference type="ChEBI" id="CHEBI:30616"/>
    </ligand>
</feature>
<feature type="modified residue" description="N-acetylserine" evidence="18">
    <location>
        <position position="2"/>
    </location>
</feature>
<feature type="modified residue" description="Phosphoserine" evidence="24">
    <location>
        <position position="321"/>
    </location>
</feature>
<feature type="modified residue" description="N6-acetyllysine" evidence="23">
    <location>
        <position position="491"/>
    </location>
</feature>
<feature type="splice variant" id="VSP_062535" description="In isoform 3.">
    <location>
        <begin position="1"/>
        <end position="79"/>
    </location>
</feature>
<feature type="splice variant" id="VSP_062536" description="In isoform 1.">
    <original>K</original>
    <variation>KMRLEALSLLHTLVWAWSLCRAGAVQTQERLSGSASPEQVPAGECCALQ</variation>
    <location>
        <position position="94"/>
    </location>
</feature>
<feature type="sequence variant" id="VAR_023526" description="In dbSNP:rs2274435." evidence="3">
    <original>G</original>
    <variation>D</variation>
    <location>
        <position position="15"/>
    </location>
</feature>
<feature type="sequence variant" id="VAR_082788" description="In HAYOS; dbSNP:rs1057517687." evidence="12">
    <original>T</original>
    <variation>I</variation>
    <location>
        <position position="53"/>
    </location>
</feature>
<feature type="sequence variant" id="VAR_083867" description="In PHRINL; dbSNP:rs1570319915." evidence="13">
    <original>L</original>
    <variation>R</variation>
    <location>
        <position position="77"/>
    </location>
</feature>
<feature type="sequence variant" id="VAR_083868" description="In PHRINL; dbSNP:rs760826883." evidence="13">
    <location>
        <begin position="164"/>
        <end position="586"/>
    </location>
</feature>
<feature type="sequence variant" id="VAR_083869" description="In PHRINL; decreased protein levels in patient cells; dbSNP:rs1570345942." evidence="15">
    <original>L</original>
    <variation>R</variation>
    <location>
        <position position="406"/>
    </location>
</feature>
<feature type="sequence variant" id="VAR_082789" description="In HAYOS; dbSNP:rs1057517686." evidence="12">
    <original>R</original>
    <variation>W</variation>
    <location>
        <position position="528"/>
    </location>
</feature>
<feature type="mutagenesis site" description="Loss of S100B-binding; when associated with S-297." evidence="9">
    <original>V</original>
    <variation>S</variation>
    <location>
        <position position="293"/>
    </location>
</feature>
<feature type="mutagenesis site" description="Loss of S100B-binding; when associated with S-293." evidence="9">
    <original>L</original>
    <variation>S</variation>
    <location>
        <position position="297"/>
    </location>
</feature>
<feature type="mutagenesis site" description="Decrease in S100B-binding." evidence="9">
    <location>
        <begin position="301"/>
        <end position="302"/>
    </location>
</feature>
<feature type="mutagenesis site" description="No effect on homooligomerization. Immediate fragmentation of the mitochondrial network." evidence="6">
    <original>K</original>
    <variation>E</variation>
    <location>
        <position position="358"/>
    </location>
</feature>
<feature type="mutagenesis site" description="No effect on homooligomerization. Immediate fragmentation of the mitochondrial network." evidence="6">
    <original>D</original>
    <variation>Q</variation>
    <location>
        <position position="411"/>
    </location>
</feature>
<feature type="mutagenesis site" description="Abolished ATPase activity without affecting its ability to interact with and inhibit EIF2AK3/PERK." evidence="17">
    <original>E</original>
    <variation>Q</variation>
    <location>
        <position position="412"/>
    </location>
</feature>
<feature type="sequence conflict" description="In Ref. 2; BAG51625." evidence="20" ref="2">
    <original>R</original>
    <variation>Q</variation>
    <location>
        <position position="176"/>
    </location>
</feature>
<feature type="sequence conflict" description="In Ref. 2; BAC03595." evidence="20" ref="2">
    <original>I</original>
    <variation>T</variation>
    <location>
        <position position="207"/>
    </location>
</feature>
<dbReference type="EC" id="3.6.1.-" evidence="6 21"/>
<dbReference type="EMBL" id="GU189416">
    <property type="protein sequence ID" value="ACZ80514.1"/>
    <property type="molecule type" value="mRNA"/>
</dbReference>
<dbReference type="EMBL" id="AK001571">
    <property type="protein sequence ID" value="BAA91764.1"/>
    <property type="molecule type" value="mRNA"/>
</dbReference>
<dbReference type="EMBL" id="AK056099">
    <property type="protein sequence ID" value="BAG51625.1"/>
    <property type="molecule type" value="mRNA"/>
</dbReference>
<dbReference type="EMBL" id="AK091144">
    <property type="protein sequence ID" value="BAC03595.1"/>
    <property type="molecule type" value="mRNA"/>
</dbReference>
<dbReference type="EMBL" id="AL645728">
    <property type="status" value="NOT_ANNOTATED_CDS"/>
    <property type="molecule type" value="Genomic_DNA"/>
</dbReference>
<dbReference type="EMBL" id="CH471183">
    <property type="protein sequence ID" value="EAW56187.1"/>
    <property type="molecule type" value="Genomic_DNA"/>
</dbReference>
<dbReference type="EMBL" id="CH471183">
    <property type="protein sequence ID" value="EAW56190.1"/>
    <property type="molecule type" value="Genomic_DNA"/>
</dbReference>
<dbReference type="EMBL" id="BC007803">
    <property type="protein sequence ID" value="AAH07803.1"/>
    <property type="molecule type" value="mRNA"/>
</dbReference>
<dbReference type="EMBL" id="BC011814">
    <property type="protein sequence ID" value="AAH11814.1"/>
    <property type="molecule type" value="mRNA"/>
</dbReference>
<dbReference type="EMBL" id="BC014101">
    <property type="protein sequence ID" value="AAH14101.1"/>
    <property type="molecule type" value="mRNA"/>
</dbReference>
<dbReference type="EMBL" id="BC033109">
    <property type="protein sequence ID" value="AAH33109.1"/>
    <property type="molecule type" value="mRNA"/>
</dbReference>
<dbReference type="EMBL" id="BC063607">
    <property type="protein sequence ID" value="AAH63607.1"/>
    <property type="molecule type" value="mRNA"/>
</dbReference>
<dbReference type="CCDS" id="CCDS31.1">
    <molecule id="Q9NVI7-2"/>
</dbReference>
<dbReference type="CCDS" id="CCDS53259.1">
    <molecule id="Q9NVI7-2"/>
</dbReference>
<dbReference type="CCDS" id="CCDS53260.1">
    <molecule id="Q9NVI7-3"/>
</dbReference>
<dbReference type="RefSeq" id="NP_001164006.1">
    <molecule id="Q9NVI7-2"/>
    <property type="nucleotide sequence ID" value="NM_001170535.3"/>
</dbReference>
<dbReference type="RefSeq" id="NP_001164007.1">
    <molecule id="Q9NVI7-3"/>
    <property type="nucleotide sequence ID" value="NM_001170536.3"/>
</dbReference>
<dbReference type="RefSeq" id="NP_060658.3">
    <molecule id="Q9NVI7-1"/>
    <property type="nucleotide sequence ID" value="NM_018188.4"/>
</dbReference>
<dbReference type="SMR" id="Q9NVI7"/>
<dbReference type="BioGRID" id="120506">
    <property type="interactions" value="365"/>
</dbReference>
<dbReference type="DIP" id="DIP-33194N"/>
<dbReference type="FunCoup" id="Q9NVI7">
    <property type="interactions" value="2296"/>
</dbReference>
<dbReference type="IntAct" id="Q9NVI7">
    <property type="interactions" value="282"/>
</dbReference>
<dbReference type="MINT" id="Q9NVI7"/>
<dbReference type="STRING" id="9606.ENSP00000368030"/>
<dbReference type="GlyGen" id="Q9NVI7">
    <property type="glycosylation" value="3 sites, 2 N-linked glycans (2 sites), 1 O-linked glycan (1 site)"/>
</dbReference>
<dbReference type="iPTMnet" id="Q9NVI7"/>
<dbReference type="MetOSite" id="Q9NVI7"/>
<dbReference type="PhosphoSitePlus" id="Q9NVI7"/>
<dbReference type="SwissPalm" id="Q9NVI7"/>
<dbReference type="BioMuta" id="ATAD3A"/>
<dbReference type="DMDM" id="84028405"/>
<dbReference type="jPOST" id="Q9NVI7"/>
<dbReference type="MassIVE" id="Q9NVI7"/>
<dbReference type="PaxDb" id="9606-ENSP00000368030"/>
<dbReference type="PeptideAtlas" id="Q9NVI7"/>
<dbReference type="PRIDE" id="Q9NVI7"/>
<dbReference type="ProteomicsDB" id="32346"/>
<dbReference type="ProteomicsDB" id="82815">
    <molecule id="Q9NVI7-1"/>
</dbReference>
<dbReference type="ProteomicsDB" id="82816">
    <molecule id="Q9NVI7-2"/>
</dbReference>
<dbReference type="Pumba" id="Q9NVI7"/>
<dbReference type="Antibodypedia" id="26400">
    <property type="antibodies" value="166 antibodies from 25 providers"/>
</dbReference>
<dbReference type="DNASU" id="55210"/>
<dbReference type="Ensembl" id="ENST00000378755.9">
    <molecule id="Q9NVI7-1"/>
    <property type="protein sequence ID" value="ENSP00000368030.5"/>
    <property type="gene ID" value="ENSG00000197785.14"/>
</dbReference>
<dbReference type="Ensembl" id="ENST00000378756.8">
    <molecule id="Q9NVI7-2"/>
    <property type="protein sequence ID" value="ENSP00000368031.3"/>
    <property type="gene ID" value="ENSG00000197785.14"/>
</dbReference>
<dbReference type="Ensembl" id="ENST00000536055.6">
    <molecule id="Q9NVI7-3"/>
    <property type="protein sequence ID" value="ENSP00000439290.1"/>
    <property type="gene ID" value="ENSG00000197785.14"/>
</dbReference>
<dbReference type="GeneID" id="55210"/>
<dbReference type="KEGG" id="hsa:55210"/>
<dbReference type="MANE-Select" id="ENST00000378756.8">
    <property type="protein sequence ID" value="ENSP00000368031.3"/>
    <property type="RefSeq nucleotide sequence ID" value="NM_001170535.3"/>
    <property type="RefSeq protein sequence ID" value="NP_001164006.1"/>
</dbReference>
<dbReference type="UCSC" id="uc001afz.3">
    <molecule id="Q9NVI7-2"/>
    <property type="organism name" value="human"/>
</dbReference>
<dbReference type="AGR" id="HGNC:25567"/>
<dbReference type="CTD" id="55210"/>
<dbReference type="DisGeNET" id="55210"/>
<dbReference type="GeneCards" id="ATAD3A"/>
<dbReference type="HGNC" id="HGNC:25567">
    <property type="gene designation" value="ATAD3A"/>
</dbReference>
<dbReference type="HPA" id="ENSG00000197785">
    <property type="expression patterns" value="Low tissue specificity"/>
</dbReference>
<dbReference type="MalaCards" id="ATAD3A"/>
<dbReference type="MIM" id="612316">
    <property type="type" value="gene"/>
</dbReference>
<dbReference type="MIM" id="617183">
    <property type="type" value="phenotype"/>
</dbReference>
<dbReference type="MIM" id="618810">
    <property type="type" value="phenotype"/>
</dbReference>
<dbReference type="neXtProt" id="NX_Q9NVI7"/>
<dbReference type="OpenTargets" id="ENSG00000197785"/>
<dbReference type="Orphanet" id="656279">
    <property type="disease" value="1p36.33 duplication syndrome"/>
</dbReference>
<dbReference type="Orphanet" id="615983">
    <property type="disease" value="Lethal pontocerebellar hypoplasia-hypotonia-respiratory insufficiency syndrome due to a point mutation"/>
</dbReference>
<dbReference type="Orphanet" id="615986">
    <property type="disease" value="Lethal pontocerebellar hypoplasia-hypotonia-respiratory insufficiency syndrome due to biallelic deletions in the ATAD3 gene cluster"/>
</dbReference>
<dbReference type="Orphanet" id="496790">
    <property type="disease" value="Ocular anomalies-axonal neuropathy-developmental delay syndrome"/>
</dbReference>
<dbReference type="PharmGKB" id="PA134872099"/>
<dbReference type="VEuPathDB" id="HostDB:ENSG00000197785"/>
<dbReference type="eggNOG" id="KOG0742">
    <property type="taxonomic scope" value="Eukaryota"/>
</dbReference>
<dbReference type="GeneTree" id="ENSGT00730000111059"/>
<dbReference type="HOGENOM" id="CLU_011488_2_0_1"/>
<dbReference type="InParanoid" id="Q9NVI7"/>
<dbReference type="OMA" id="HKSITGG"/>
<dbReference type="OrthoDB" id="199596at2759"/>
<dbReference type="PAN-GO" id="Q9NVI7">
    <property type="GO annotations" value="2 GO annotations based on evolutionary models"/>
</dbReference>
<dbReference type="PhylomeDB" id="Q9NVI7"/>
<dbReference type="TreeFam" id="TF313922"/>
<dbReference type="PathwayCommons" id="Q9NVI7"/>
<dbReference type="SignaLink" id="Q9NVI7"/>
<dbReference type="BioGRID-ORCS" id="55210">
    <property type="hits" value="46 hits in 1120 CRISPR screens"/>
</dbReference>
<dbReference type="CD-CODE" id="232F8A39">
    <property type="entry name" value="P-body"/>
</dbReference>
<dbReference type="CD-CODE" id="91857CE7">
    <property type="entry name" value="Nucleolus"/>
</dbReference>
<dbReference type="CD-CODE" id="DEE660B4">
    <property type="entry name" value="Stress granule"/>
</dbReference>
<dbReference type="ChiTaRS" id="ATAD3A">
    <property type="organism name" value="human"/>
</dbReference>
<dbReference type="GenomeRNAi" id="55210"/>
<dbReference type="Pharos" id="Q9NVI7">
    <property type="development level" value="Tbio"/>
</dbReference>
<dbReference type="PRO" id="PR:Q9NVI7"/>
<dbReference type="Proteomes" id="UP000005640">
    <property type="component" value="Chromosome 1"/>
</dbReference>
<dbReference type="RNAct" id="Q9NVI7">
    <property type="molecule type" value="protein"/>
</dbReference>
<dbReference type="Bgee" id="ENSG00000197785">
    <property type="expression patterns" value="Expressed in sural nerve and 179 other cell types or tissues"/>
</dbReference>
<dbReference type="ExpressionAtlas" id="Q9NVI7">
    <property type="expression patterns" value="baseline and differential"/>
</dbReference>
<dbReference type="GO" id="GO:0044233">
    <property type="term" value="C:mitochondria-associated endoplasmic reticulum membrane contact site"/>
    <property type="evidence" value="ECO:0000314"/>
    <property type="project" value="UniProtKB"/>
</dbReference>
<dbReference type="GO" id="GO:0005743">
    <property type="term" value="C:mitochondrial inner membrane"/>
    <property type="evidence" value="ECO:0000314"/>
    <property type="project" value="UniProtKB"/>
</dbReference>
<dbReference type="GO" id="GO:0042645">
    <property type="term" value="C:mitochondrial nucleoid"/>
    <property type="evidence" value="ECO:0007669"/>
    <property type="project" value="UniProtKB-SubCell"/>
</dbReference>
<dbReference type="GO" id="GO:0005739">
    <property type="term" value="C:mitochondrion"/>
    <property type="evidence" value="ECO:0000314"/>
    <property type="project" value="HPA"/>
</dbReference>
<dbReference type="GO" id="GO:0005524">
    <property type="term" value="F:ATP binding"/>
    <property type="evidence" value="ECO:0000315"/>
    <property type="project" value="FlyBase"/>
</dbReference>
<dbReference type="GO" id="GO:0016887">
    <property type="term" value="F:ATP hydrolysis activity"/>
    <property type="evidence" value="ECO:0000315"/>
    <property type="project" value="UniProtKB"/>
</dbReference>
<dbReference type="GO" id="GO:0042802">
    <property type="term" value="F:identical protein binding"/>
    <property type="evidence" value="ECO:0000353"/>
    <property type="project" value="IntAct"/>
</dbReference>
<dbReference type="GO" id="GO:0030291">
    <property type="term" value="F:protein serine/threonine kinase inhibitor activity"/>
    <property type="evidence" value="ECO:0000314"/>
    <property type="project" value="UniProtKB"/>
</dbReference>
<dbReference type="GO" id="GO:0140374">
    <property type="term" value="P:antiviral innate immune response"/>
    <property type="evidence" value="ECO:0000315"/>
    <property type="project" value="UniProtKB"/>
</dbReference>
<dbReference type="GO" id="GO:0006974">
    <property type="term" value="P:DNA damage response"/>
    <property type="evidence" value="ECO:0000314"/>
    <property type="project" value="UniProtKB"/>
</dbReference>
<dbReference type="GO" id="GO:0140468">
    <property type="term" value="P:HRI-mediated signaling"/>
    <property type="evidence" value="ECO:0000314"/>
    <property type="project" value="UniProtKB"/>
</dbReference>
<dbReference type="GO" id="GO:0007005">
    <property type="term" value="P:mitochondrion organization"/>
    <property type="evidence" value="ECO:0000315"/>
    <property type="project" value="FlyBase"/>
</dbReference>
<dbReference type="GO" id="GO:0043066">
    <property type="term" value="P:negative regulation of apoptotic process"/>
    <property type="evidence" value="ECO:0000315"/>
    <property type="project" value="UniProtKB"/>
</dbReference>
<dbReference type="GO" id="GO:1903898">
    <property type="term" value="P:negative regulation of PERK-mediated unfolded protein response"/>
    <property type="evidence" value="ECO:0000314"/>
    <property type="project" value="UniProtKB"/>
</dbReference>
<dbReference type="GO" id="GO:0001558">
    <property type="term" value="P:regulation of cell growth"/>
    <property type="evidence" value="ECO:0000315"/>
    <property type="project" value="UniProtKB"/>
</dbReference>
<dbReference type="CDD" id="cd19512">
    <property type="entry name" value="RecA-like_ATAD3-like"/>
    <property type="match status" value="1"/>
</dbReference>
<dbReference type="FunFam" id="3.40.50.300:FF:000470">
    <property type="entry name" value="ATPase family, AAA domain containing 3A"/>
    <property type="match status" value="1"/>
</dbReference>
<dbReference type="Gene3D" id="3.40.50.300">
    <property type="entry name" value="P-loop containing nucleotide triphosphate hydrolases"/>
    <property type="match status" value="1"/>
</dbReference>
<dbReference type="InterPro" id="IPR003593">
    <property type="entry name" value="AAA+_ATPase"/>
</dbReference>
<dbReference type="InterPro" id="IPR021911">
    <property type="entry name" value="ATAD3_N"/>
</dbReference>
<dbReference type="InterPro" id="IPR003959">
    <property type="entry name" value="ATPase_AAA_core"/>
</dbReference>
<dbReference type="InterPro" id="IPR027417">
    <property type="entry name" value="P-loop_NTPase"/>
</dbReference>
<dbReference type="PANTHER" id="PTHR23075:SF5">
    <property type="entry name" value="ATPASE FAMILY AAA DOMAIN-CONTAINING PROTEIN 3A"/>
    <property type="match status" value="1"/>
</dbReference>
<dbReference type="PANTHER" id="PTHR23075">
    <property type="entry name" value="PUTATIVE ATP-ASE"/>
    <property type="match status" value="1"/>
</dbReference>
<dbReference type="Pfam" id="PF00004">
    <property type="entry name" value="AAA"/>
    <property type="match status" value="1"/>
</dbReference>
<dbReference type="Pfam" id="PF12037">
    <property type="entry name" value="ATAD3_N"/>
    <property type="match status" value="1"/>
</dbReference>
<dbReference type="SMART" id="SM00382">
    <property type="entry name" value="AAA"/>
    <property type="match status" value="1"/>
</dbReference>
<dbReference type="SUPFAM" id="SSF52540">
    <property type="entry name" value="P-loop containing nucleoside triphosphate hydrolases"/>
    <property type="match status" value="1"/>
</dbReference>
<gene>
    <name evidence="19 22" type="primary">ATAD3A</name>
</gene>
<comment type="function">
    <text evidence="4 6 10 14 16 17">Essential for mitochondrial network organization, mitochondrial metabolism and cell growth at organism and cellular level (PubMed:17210950, PubMed:20154147, PubMed:22453275, PubMed:31522117, PubMed:37832546, PubMed:39116259). May play an important role in mitochondrial protein synthesis (PubMed:22453275). May also participate in mitochondrial DNA replication (PubMed:17210950). May bind to mitochondrial DNA D-loops and contribute to nucleoid stability (PubMed:17210950). Required for enhanced channeling of cholesterol for hormone-dependent steroidogenesis (PubMed:22453275). Involved in mitochondrial-mediated antiviral innate immunity (PubMed:31522117). Required to protect mitochondria from the PERK-mediated unfolded protein response: specifically inhibits the activity of EIF2AK3/PERK at mitochondria-endoplasmic reticulum contact sites, thereby providing a safe haven for mitochondrial protein translation during endoplasmic reticulum stress (PubMed:39116259). Ability to inhibit EIF2AK3/PERK is independent of its ATPase activity (PubMed:39116259). Also involved in the mitochondrial DNA damage response by promoting signaling between damaged genomes and the mitochondrial membrane, leading to activation of the integrated stress response (ISR) (PubMed:37832546).</text>
</comment>
<comment type="catalytic activity">
    <reaction evidence="6 21">
        <text>ATP + H2O = ADP + phosphate + H(+)</text>
        <dbReference type="Rhea" id="RHEA:13065"/>
        <dbReference type="ChEBI" id="CHEBI:15377"/>
        <dbReference type="ChEBI" id="CHEBI:15378"/>
        <dbReference type="ChEBI" id="CHEBI:30616"/>
        <dbReference type="ChEBI" id="CHEBI:43474"/>
        <dbReference type="ChEBI" id="CHEBI:456216"/>
    </reaction>
    <physiologicalReaction direction="left-to-right" evidence="6 21">
        <dbReference type="Rhea" id="RHEA:13066"/>
    </physiologicalReaction>
</comment>
<comment type="subunit">
    <text evidence="6 9 10 11 14 17">Can form homooligomers (PubMed:20154147). Homodimer formation at the N-terminus may be regulated by ATP and is required for the interaction with the inner surface of the mitochondrial outer membrane and correct mitochondrial homeostasis (PubMed:20154147). Interacts with components of the mitochondrial ribosome and with other proteins involved in mitochondrial RNA metabolism (PubMed:22453275). May also interact with protein involved in lipid metabolism, including STARD9 (PubMed:22453275). May interact with FAM210A (PubMed:22453275). Interacts with GADD45GIP1 (PubMed:22453275). Interacts with S100B in a Ca(+2)- and Zn(+2)-dependent manner; this interaction probably occurs in the cytosol prior to mitochondrial targeting (PubMed:20351179). S100B could assist ATAD3A cytoplasmic processing, preventing aggregation and favoring mitochondrial localization (PubMed:20351179). Interacts with HSP60/HSPD1 (PubMed:22664726). Forms heterooligomers with ATAD3B; this interaction may affect ATAD3A activity (PubMed:22664726). Interacts with CLPB (PubMed:31522117). Interacts with EIF2AK3/PERK; ATAD3A and EIF2S1/eIF-2-alpha occupy a common binding site within the cytoplasmic loop of EIF2AK3/PERK, leading to prevent EIF2AK3/PERK association with its substrate EIF2S1/eIF-2-alpha (PubMed:39116259).</text>
</comment>
<comment type="interaction">
    <interactant intactId="EBI-352007">
        <id>Q9NVI7</id>
    </interactant>
    <interactant intactId="EBI-724571">
        <id>O00429</id>
        <label>DNM1L</label>
    </interactant>
    <organismsDiffer>false</organismsDiffer>
    <experiments>4</experiments>
</comment>
<comment type="interaction">
    <interactant intactId="EBI-352007">
        <id>Q9NVI7</id>
    </interactant>
    <interactant intactId="EBI-352528">
        <id>P10809</id>
        <label>HSPD1</label>
    </interactant>
    <organismsDiffer>false</organismsDiffer>
    <experiments>4</experiments>
</comment>
<comment type="interaction">
    <interactant intactId="EBI-5456381">
        <id>Q9NVI7-2</id>
    </interactant>
    <interactant intactId="EBI-5456381">
        <id>Q9NVI7-2</id>
        <label>ATAD3A</label>
    </interactant>
    <organismsDiffer>false</organismsDiffer>
    <experiments>2</experiments>
</comment>
<comment type="interaction">
    <interactant intactId="EBI-5456381">
        <id>Q9NVI7-2</id>
    </interactant>
    <interactant intactId="EBI-724571">
        <id>O00429</id>
        <label>DNM1L</label>
    </interactant>
    <organismsDiffer>false</organismsDiffer>
    <experiments>5</experiments>
</comment>
<comment type="subcellular location">
    <subcellularLocation>
        <location evidence="5 6 7 8">Mitochondrion inner membrane</location>
        <topology evidence="6 8">Single-pass membrane protein</topology>
    </subcellularLocation>
    <subcellularLocation>
        <location evidence="4 5">Mitochondrion matrix</location>
        <location evidence="4 5">Mitochondrion nucleoid</location>
    </subcellularLocation>
    <text evidence="5 6 8 17">In the mitochondrial inner membrane, enriched in sites with the potential to form contacts with the outer membrane (PubMed:20154147, PubMed:20349121). The N-terminal domain interacts with the inner surface of the mitochondrial outer membrane and the C-terminal domain localizes in a specific matrix compartment, where it is associated with nucleoids (PubMed:18063578). Also present at mitochondria-endoplasmic reticulum contact sites; where it interacts with EIF2AK3/PERK (PubMed:39116259).</text>
</comment>
<comment type="alternative products">
    <event type="alternative splicing"/>
    <isoform>
        <id>Q9NVI7-2</id>
        <name>2</name>
        <sequence type="displayed"/>
    </isoform>
    <isoform>
        <id>Q9NVI7-1</id>
        <name>1</name>
        <sequence type="described" ref="VSP_062536"/>
    </isoform>
    <isoform>
        <id>Q9NVI7-3</id>
        <name>3</name>
        <sequence type="described" ref="VSP_062535"/>
    </isoform>
</comment>
<comment type="tissue specificity">
    <text evidence="7">Overexpressed in lung adenocarcinomas (at protein level).</text>
</comment>
<comment type="induction">
    <text evidence="6 10">Up-regulated by Angiotensin/AGT.</text>
</comment>
<comment type="domain">
    <text evidence="6">The transmembrane domain and a C-terminal adjacent region contain all information necessary for mitochondrial targeting.</text>
</comment>
<comment type="disease" evidence="12">
    <disease id="DI-04881">
        <name>Harel-Yoon syndrome</name>
        <acronym>HAYOS</acronym>
        <description>A syndrome characterized by global developmental delay, hypotonia, intellectual disability, and axonal neuropathy. Some patients have optic atrophy and hypertrophic cardiomyopathy. HAYOS inheritance can be autosomal dominant or autosomal recessive.</description>
        <dbReference type="MIM" id="617183"/>
    </disease>
    <text>The disease is caused by variants affecting the gene represented in this entry.</text>
</comment>
<comment type="disease" evidence="13 15">
    <disease id="DI-05789">
        <name>Pontocerebellar hypoplasia, hypotonia, and respiratory insufficiency syndrome, neonatal lethal</name>
        <acronym>PHRINL</acronym>
        <description>An autosomal recessive multisystem disorder with onset in utero and death in the neonatal period. Affected infants show respiratory insufficiency and almost no spontaneous movement at birth. Additional features include corneal clouding, seizures, dysmorphic facies, contractures, and progressive pontocerebellar hypoplasia with simplified gyral pattern and white matter abnormalities. Some patients may have cardiac anomalies or cardiac hypertrophy.</description>
        <dbReference type="MIM" id="618810"/>
    </disease>
    <text>The disease is caused by variants affecting the gene represented in this entry.</text>
</comment>
<comment type="similarity">
    <text evidence="20">Belongs to the AAA ATPase family.</text>
</comment>
<sequence length="586" mass="66218">MSWLFGINKGPKGEGAGPPPPLPPAQPGAEGGGDRGLGDRPAPKDKWSNFDPTGLERAAKAARELEHSRYAKDALNLAQMQEQTLQLEQQSKLKEYEAAVEQLKSEQIRAQAEERRKTLSEETRQHQARAQYQDKLARQRYEDQLKQQQLLNEENLRKQEESVQKQEAMRRATVEREMELRHKNEMLRVEAEARARAKAERENADIIREQIRLKAAEHRQTVLESIRTAGTLFGEGFRAFVTDWDKVTATVAGLTLLAVGVYSAKNATLVAGRFIEARLGKPSLVRETSRITVLEALRHPIQVSRRLLSRPQDALEGVVLSPSLEARVRDIAIATRNTKKNRSLYRNILMYGPPGTGKTLFAKKLALHSGMDYAIMTGGDVAPMGREGVTAMHKLFDWANTSRRGLLLFVDEADAFLRKRATEKISEDLRATLNAFLYRTGQHSNKFMLVLASNQPEQFDWAINDRINEMVHFDLPGQEERERLVRMYFDKYVLKPATEGKQRLKLAQFDYGRKCSEVARLTEGMSGREIAQLAVSWQATAYASEDGVLTEAMMDTRVQDAVQQHQQKMCWLKAEGPGRGDEPSPS</sequence>
<proteinExistence type="evidence at protein level"/>